<organism>
    <name type="scientific">Rattus norvegicus</name>
    <name type="common">Rat</name>
    <dbReference type="NCBI Taxonomy" id="10116"/>
    <lineage>
        <taxon>Eukaryota</taxon>
        <taxon>Metazoa</taxon>
        <taxon>Chordata</taxon>
        <taxon>Craniata</taxon>
        <taxon>Vertebrata</taxon>
        <taxon>Euteleostomi</taxon>
        <taxon>Mammalia</taxon>
        <taxon>Eutheria</taxon>
        <taxon>Euarchontoglires</taxon>
        <taxon>Glires</taxon>
        <taxon>Rodentia</taxon>
        <taxon>Myomorpha</taxon>
        <taxon>Muroidea</taxon>
        <taxon>Muridae</taxon>
        <taxon>Murinae</taxon>
        <taxon>Rattus</taxon>
    </lineage>
</organism>
<dbReference type="EMBL" id="AJ001713">
    <property type="protein sequence ID" value="CAA04946.1"/>
    <property type="molecule type" value="mRNA"/>
</dbReference>
<dbReference type="PIR" id="T31099">
    <property type="entry name" value="T31099"/>
</dbReference>
<dbReference type="RefSeq" id="NP_599162.1">
    <property type="nucleotide sequence ID" value="NM_134335.1"/>
</dbReference>
<dbReference type="SMR" id="Q9Z1N3"/>
<dbReference type="FunCoup" id="Q9Z1N3">
    <property type="interactions" value="3156"/>
</dbReference>
<dbReference type="STRING" id="10116.ENSRNOP00000015963"/>
<dbReference type="GlyGen" id="Q9Z1N3">
    <property type="glycosylation" value="1 site"/>
</dbReference>
<dbReference type="iPTMnet" id="Q9Z1N3"/>
<dbReference type="PhosphoSitePlus" id="Q9Z1N3"/>
<dbReference type="PaxDb" id="10116-ENSRNOP00000015963"/>
<dbReference type="GeneID" id="171296"/>
<dbReference type="KEGG" id="rno:171296"/>
<dbReference type="UCSC" id="RGD:621395">
    <property type="organism name" value="rat"/>
</dbReference>
<dbReference type="AGR" id="RGD:621395"/>
<dbReference type="CTD" id="4649"/>
<dbReference type="RGD" id="621395">
    <property type="gene designation" value="Myo9a"/>
</dbReference>
<dbReference type="eggNOG" id="KOG1453">
    <property type="taxonomic scope" value="Eukaryota"/>
</dbReference>
<dbReference type="eggNOG" id="KOG4229">
    <property type="taxonomic scope" value="Eukaryota"/>
</dbReference>
<dbReference type="InParanoid" id="Q9Z1N3"/>
<dbReference type="PhylomeDB" id="Q9Z1N3"/>
<dbReference type="Reactome" id="R-RNO-8980692">
    <property type="pathway name" value="RHOA GTPase cycle"/>
</dbReference>
<dbReference type="Reactome" id="R-RNO-9013026">
    <property type="pathway name" value="RHOB GTPase cycle"/>
</dbReference>
<dbReference type="Reactome" id="R-RNO-9013424">
    <property type="pathway name" value="RHOV GTPase cycle"/>
</dbReference>
<dbReference type="PRO" id="PR:Q9Z1N3"/>
<dbReference type="Proteomes" id="UP000002494">
    <property type="component" value="Unplaced"/>
</dbReference>
<dbReference type="GO" id="GO:0005884">
    <property type="term" value="C:actin filament"/>
    <property type="evidence" value="ECO:0000318"/>
    <property type="project" value="GO_Central"/>
</dbReference>
<dbReference type="GO" id="GO:0044295">
    <property type="term" value="C:axonal growth cone"/>
    <property type="evidence" value="ECO:0000250"/>
    <property type="project" value="UniProtKB"/>
</dbReference>
<dbReference type="GO" id="GO:0005737">
    <property type="term" value="C:cytoplasm"/>
    <property type="evidence" value="ECO:0007669"/>
    <property type="project" value="UniProtKB-SubCell"/>
</dbReference>
<dbReference type="GO" id="GO:0098978">
    <property type="term" value="C:glutamatergic synapse"/>
    <property type="evidence" value="ECO:0000314"/>
    <property type="project" value="SynGO"/>
</dbReference>
<dbReference type="GO" id="GO:0016020">
    <property type="term" value="C:membrane"/>
    <property type="evidence" value="ECO:0007669"/>
    <property type="project" value="UniProtKB-SubCell"/>
</dbReference>
<dbReference type="GO" id="GO:0016459">
    <property type="term" value="C:myosin complex"/>
    <property type="evidence" value="ECO:0007669"/>
    <property type="project" value="UniProtKB-KW"/>
</dbReference>
<dbReference type="GO" id="GO:0098794">
    <property type="term" value="C:postsynapse"/>
    <property type="evidence" value="ECO:0000314"/>
    <property type="project" value="SynGO"/>
</dbReference>
<dbReference type="GO" id="GO:0098685">
    <property type="term" value="C:Schaffer collateral - CA1 synapse"/>
    <property type="evidence" value="ECO:0000266"/>
    <property type="project" value="RGD"/>
</dbReference>
<dbReference type="GO" id="GO:0051015">
    <property type="term" value="F:actin filament binding"/>
    <property type="evidence" value="ECO:0000318"/>
    <property type="project" value="GO_Central"/>
</dbReference>
<dbReference type="GO" id="GO:0005524">
    <property type="term" value="F:ATP binding"/>
    <property type="evidence" value="ECO:0007669"/>
    <property type="project" value="UniProtKB-KW"/>
</dbReference>
<dbReference type="GO" id="GO:0005096">
    <property type="term" value="F:GTPase activator activity"/>
    <property type="evidence" value="ECO:0007669"/>
    <property type="project" value="UniProtKB-KW"/>
</dbReference>
<dbReference type="GO" id="GO:0000146">
    <property type="term" value="F:microfilament motor activity"/>
    <property type="evidence" value="ECO:0000318"/>
    <property type="project" value="GO_Central"/>
</dbReference>
<dbReference type="GO" id="GO:0008270">
    <property type="term" value="F:zinc ion binding"/>
    <property type="evidence" value="ECO:0007669"/>
    <property type="project" value="UniProtKB-KW"/>
</dbReference>
<dbReference type="GO" id="GO:0034329">
    <property type="term" value="P:cell junction assembly"/>
    <property type="evidence" value="ECO:0000250"/>
    <property type="project" value="UniProtKB"/>
</dbReference>
<dbReference type="GO" id="GO:0045198">
    <property type="term" value="P:establishment of epithelial cell apical/basal polarity"/>
    <property type="evidence" value="ECO:0000250"/>
    <property type="project" value="UniProtKB"/>
</dbReference>
<dbReference type="GO" id="GO:0035556">
    <property type="term" value="P:intracellular signal transduction"/>
    <property type="evidence" value="ECO:0007669"/>
    <property type="project" value="InterPro"/>
</dbReference>
<dbReference type="GO" id="GO:0099084">
    <property type="term" value="P:postsynaptic specialization organization"/>
    <property type="evidence" value="ECO:0000266"/>
    <property type="project" value="RGD"/>
</dbReference>
<dbReference type="GO" id="GO:0150011">
    <property type="term" value="P:regulation of neuron projection arborization"/>
    <property type="evidence" value="ECO:0000250"/>
    <property type="project" value="UniProtKB"/>
</dbReference>
<dbReference type="CDD" id="cd20883">
    <property type="entry name" value="C1_Myosin-IXa"/>
    <property type="match status" value="1"/>
</dbReference>
<dbReference type="CDD" id="cd23767">
    <property type="entry name" value="IQCD"/>
    <property type="match status" value="1"/>
</dbReference>
<dbReference type="CDD" id="cd01385">
    <property type="entry name" value="MYSc_Myo9"/>
    <property type="match status" value="1"/>
</dbReference>
<dbReference type="CDD" id="cd17216">
    <property type="entry name" value="RA_Myosin-IXa"/>
    <property type="match status" value="1"/>
</dbReference>
<dbReference type="CDD" id="cd04406">
    <property type="entry name" value="RhoGAP_myosin_IXA"/>
    <property type="match status" value="1"/>
</dbReference>
<dbReference type="FunFam" id="1.20.5.190:FF:000027">
    <property type="entry name" value="Myosin IXA"/>
    <property type="match status" value="1"/>
</dbReference>
<dbReference type="FunFam" id="1.20.5.190:FF:000018">
    <property type="entry name" value="Myosin XI D"/>
    <property type="match status" value="1"/>
</dbReference>
<dbReference type="FunFam" id="1.20.120.720:FF:000003">
    <property type="entry name" value="Putative unconventional myosin-IXa"/>
    <property type="match status" value="1"/>
</dbReference>
<dbReference type="FunFam" id="3.30.60.20:FF:000020">
    <property type="entry name" value="Putative unconventional myosin-IXa"/>
    <property type="match status" value="1"/>
</dbReference>
<dbReference type="FunFam" id="3.40.850.10:FF:000008">
    <property type="entry name" value="Putative unconventional myosin-IXa"/>
    <property type="match status" value="1"/>
</dbReference>
<dbReference type="FunFam" id="1.10.10.820:FF:000003">
    <property type="entry name" value="unconventional myosin-IXa isoform X1"/>
    <property type="match status" value="1"/>
</dbReference>
<dbReference type="FunFam" id="1.10.555.10:FF:000009">
    <property type="entry name" value="unconventional myosin-IXa isoform X1"/>
    <property type="match status" value="1"/>
</dbReference>
<dbReference type="FunFam" id="1.20.58.530:FF:000005">
    <property type="entry name" value="unconventional myosin-IXa isoform X1"/>
    <property type="match status" value="1"/>
</dbReference>
<dbReference type="FunFam" id="3.10.20.90:FF:000121">
    <property type="entry name" value="unconventional myosin-IXa isoform X1"/>
    <property type="match status" value="1"/>
</dbReference>
<dbReference type="FunFam" id="3.40.850.10:FF:000013">
    <property type="entry name" value="unconventional myosin-IXa isoform X1"/>
    <property type="match status" value="1"/>
</dbReference>
<dbReference type="FunFam" id="1.20.5.190:FF:000013">
    <property type="entry name" value="unconventional myosin-IXa isoform X2"/>
    <property type="match status" value="1"/>
</dbReference>
<dbReference type="Gene3D" id="1.10.10.820">
    <property type="match status" value="1"/>
</dbReference>
<dbReference type="Gene3D" id="1.20.5.190">
    <property type="match status" value="3"/>
</dbReference>
<dbReference type="Gene3D" id="1.20.58.530">
    <property type="match status" value="1"/>
</dbReference>
<dbReference type="Gene3D" id="3.30.60.20">
    <property type="match status" value="1"/>
</dbReference>
<dbReference type="Gene3D" id="6.20.240.20">
    <property type="match status" value="1"/>
</dbReference>
<dbReference type="Gene3D" id="3.40.850.10">
    <property type="entry name" value="Kinesin motor domain"/>
    <property type="match status" value="2"/>
</dbReference>
<dbReference type="Gene3D" id="1.20.120.720">
    <property type="entry name" value="Myosin VI head, motor domain, U50 subdomain"/>
    <property type="match status" value="1"/>
</dbReference>
<dbReference type="Gene3D" id="3.10.20.90">
    <property type="entry name" value="Phosphatidylinositol 3-kinase Catalytic Subunit, Chain A, domain 1"/>
    <property type="match status" value="1"/>
</dbReference>
<dbReference type="Gene3D" id="1.10.555.10">
    <property type="entry name" value="Rho GTPase activation protein"/>
    <property type="match status" value="1"/>
</dbReference>
<dbReference type="InterPro" id="IPR046349">
    <property type="entry name" value="C1-like_sf"/>
</dbReference>
<dbReference type="InterPro" id="IPR000048">
    <property type="entry name" value="IQ_motif_EF-hand-BS"/>
</dbReference>
<dbReference type="InterPro" id="IPR036961">
    <property type="entry name" value="Kinesin_motor_dom_sf"/>
</dbReference>
<dbReference type="InterPro" id="IPR046987">
    <property type="entry name" value="Myo9"/>
</dbReference>
<dbReference type="InterPro" id="IPR001609">
    <property type="entry name" value="Myosin_head_motor_dom-like"/>
</dbReference>
<dbReference type="InterPro" id="IPR036023">
    <property type="entry name" value="MYSc_Myo9"/>
</dbReference>
<dbReference type="InterPro" id="IPR027417">
    <property type="entry name" value="P-loop_NTPase"/>
</dbReference>
<dbReference type="InterPro" id="IPR002219">
    <property type="entry name" value="PE/DAG-bd"/>
</dbReference>
<dbReference type="InterPro" id="IPR000159">
    <property type="entry name" value="RA_dom"/>
</dbReference>
<dbReference type="InterPro" id="IPR028558">
    <property type="entry name" value="RA_Myosin-IXa"/>
</dbReference>
<dbReference type="InterPro" id="IPR008936">
    <property type="entry name" value="Rho_GTPase_activation_prot"/>
</dbReference>
<dbReference type="InterPro" id="IPR000198">
    <property type="entry name" value="RhoGAP_dom"/>
</dbReference>
<dbReference type="InterPro" id="IPR029071">
    <property type="entry name" value="Ubiquitin-like_domsf"/>
</dbReference>
<dbReference type="PANTHER" id="PTHR46184:SF3">
    <property type="entry name" value="UNCONVENTIONAL MYOSIN-IXA"/>
    <property type="match status" value="1"/>
</dbReference>
<dbReference type="PANTHER" id="PTHR46184">
    <property type="entry name" value="UNCONVENTIONAL MYOSIN-IXB-LIKE PROTEIN"/>
    <property type="match status" value="1"/>
</dbReference>
<dbReference type="Pfam" id="PF00130">
    <property type="entry name" value="C1_1"/>
    <property type="match status" value="1"/>
</dbReference>
<dbReference type="Pfam" id="PF00612">
    <property type="entry name" value="IQ"/>
    <property type="match status" value="4"/>
</dbReference>
<dbReference type="Pfam" id="PF00063">
    <property type="entry name" value="Myosin_head"/>
    <property type="match status" value="2"/>
</dbReference>
<dbReference type="Pfam" id="PF00788">
    <property type="entry name" value="RA"/>
    <property type="match status" value="1"/>
</dbReference>
<dbReference type="Pfam" id="PF00620">
    <property type="entry name" value="RhoGAP"/>
    <property type="match status" value="1"/>
</dbReference>
<dbReference type="PRINTS" id="PR00193">
    <property type="entry name" value="MYOSINHEAVY"/>
</dbReference>
<dbReference type="SMART" id="SM00109">
    <property type="entry name" value="C1"/>
    <property type="match status" value="1"/>
</dbReference>
<dbReference type="SMART" id="SM00015">
    <property type="entry name" value="IQ"/>
    <property type="match status" value="5"/>
</dbReference>
<dbReference type="SMART" id="SM00242">
    <property type="entry name" value="MYSc"/>
    <property type="match status" value="1"/>
</dbReference>
<dbReference type="SMART" id="SM00314">
    <property type="entry name" value="RA"/>
    <property type="match status" value="1"/>
</dbReference>
<dbReference type="SMART" id="SM00324">
    <property type="entry name" value="RhoGAP"/>
    <property type="match status" value="1"/>
</dbReference>
<dbReference type="SUPFAM" id="SSF57889">
    <property type="entry name" value="Cysteine-rich domain"/>
    <property type="match status" value="1"/>
</dbReference>
<dbReference type="SUPFAM" id="SSF48350">
    <property type="entry name" value="GTPase activation domain, GAP"/>
    <property type="match status" value="1"/>
</dbReference>
<dbReference type="SUPFAM" id="SSF52540">
    <property type="entry name" value="P-loop containing nucleoside triphosphate hydrolases"/>
    <property type="match status" value="2"/>
</dbReference>
<dbReference type="SUPFAM" id="SSF54236">
    <property type="entry name" value="Ubiquitin-like"/>
    <property type="match status" value="1"/>
</dbReference>
<dbReference type="PROSITE" id="PS50096">
    <property type="entry name" value="IQ"/>
    <property type="match status" value="4"/>
</dbReference>
<dbReference type="PROSITE" id="PS51456">
    <property type="entry name" value="MYOSIN_MOTOR"/>
    <property type="match status" value="1"/>
</dbReference>
<dbReference type="PROSITE" id="PS50200">
    <property type="entry name" value="RA"/>
    <property type="match status" value="1"/>
</dbReference>
<dbReference type="PROSITE" id="PS50238">
    <property type="entry name" value="RHOGAP"/>
    <property type="match status" value="1"/>
</dbReference>
<dbReference type="PROSITE" id="PS00479">
    <property type="entry name" value="ZF_DAG_PE_1"/>
    <property type="match status" value="1"/>
</dbReference>
<dbReference type="PROSITE" id="PS50081">
    <property type="entry name" value="ZF_DAG_PE_2"/>
    <property type="match status" value="1"/>
</dbReference>
<feature type="chain" id="PRO_0000348442" description="Unconventional myosin-IXa">
    <location>
        <begin position="1"/>
        <end position="2626"/>
    </location>
</feature>
<feature type="transmembrane region" description="Helical" evidence="4">
    <location>
        <begin position="175"/>
        <end position="195"/>
    </location>
</feature>
<feature type="domain" description="Ras-associating" evidence="6">
    <location>
        <begin position="14"/>
        <end position="112"/>
    </location>
</feature>
<feature type="domain" description="Myosin motor" evidence="9">
    <location>
        <begin position="146"/>
        <end position="1017"/>
    </location>
</feature>
<feature type="domain" description="IQ 1" evidence="5">
    <location>
        <begin position="1021"/>
        <end position="1041"/>
    </location>
</feature>
<feature type="domain" description="IQ 2" evidence="5">
    <location>
        <begin position="1043"/>
        <end position="1072"/>
    </location>
</feature>
<feature type="domain" description="IQ 3" evidence="5">
    <location>
        <begin position="1075"/>
        <end position="1104"/>
    </location>
</feature>
<feature type="domain" description="IQ 4" evidence="5">
    <location>
        <begin position="1116"/>
        <end position="1145"/>
    </location>
</feature>
<feature type="domain" description="IQ 5" evidence="5">
    <location>
        <begin position="1139"/>
        <end position="1168"/>
    </location>
</feature>
<feature type="domain" description="Rho-GAP" evidence="7">
    <location>
        <begin position="2131"/>
        <end position="2319"/>
    </location>
</feature>
<feature type="zinc finger region" description="Phorbol-ester/DAG-type" evidence="8">
    <location>
        <begin position="2067"/>
        <end position="2116"/>
    </location>
</feature>
<feature type="region of interest" description="Actin-binding" evidence="1">
    <location>
        <begin position="908"/>
        <end position="919"/>
    </location>
</feature>
<feature type="region of interest" description="Neck or regulatory domain" evidence="1">
    <location>
        <begin position="1022"/>
        <end position="1163"/>
    </location>
</feature>
<feature type="region of interest" description="Tail" evidence="1">
    <location>
        <begin position="1164"/>
        <end position="2589"/>
    </location>
</feature>
<feature type="region of interest" description="Disordered" evidence="10">
    <location>
        <begin position="1221"/>
        <end position="1276"/>
    </location>
</feature>
<feature type="region of interest" description="Disordered" evidence="10">
    <location>
        <begin position="1360"/>
        <end position="1397"/>
    </location>
</feature>
<feature type="region of interest" description="Disordered" evidence="10">
    <location>
        <begin position="1562"/>
        <end position="1602"/>
    </location>
</feature>
<feature type="region of interest" description="Disordered" evidence="10">
    <location>
        <begin position="1618"/>
        <end position="1673"/>
    </location>
</feature>
<feature type="region of interest" description="Disordered" evidence="10">
    <location>
        <begin position="1689"/>
        <end position="1726"/>
    </location>
</feature>
<feature type="region of interest" description="Disordered" evidence="10">
    <location>
        <begin position="1765"/>
        <end position="1784"/>
    </location>
</feature>
<feature type="region of interest" description="Disordered" evidence="10">
    <location>
        <begin position="1872"/>
        <end position="1907"/>
    </location>
</feature>
<feature type="region of interest" description="Disordered" evidence="10">
    <location>
        <begin position="2365"/>
        <end position="2385"/>
    </location>
</feature>
<feature type="region of interest" description="Disordered" evidence="10">
    <location>
        <begin position="2449"/>
        <end position="2527"/>
    </location>
</feature>
<feature type="region of interest" description="Disordered" evidence="10">
    <location>
        <begin position="2552"/>
        <end position="2614"/>
    </location>
</feature>
<feature type="coiled-coil region" evidence="4">
    <location>
        <begin position="1265"/>
        <end position="1292"/>
    </location>
</feature>
<feature type="coiled-coil region" evidence="4">
    <location>
        <begin position="1493"/>
        <end position="1540"/>
    </location>
</feature>
<feature type="coiled-coil region" evidence="4">
    <location>
        <begin position="2408"/>
        <end position="2444"/>
    </location>
</feature>
<feature type="compositionally biased region" description="Basic and acidic residues" evidence="10">
    <location>
        <begin position="1221"/>
        <end position="1240"/>
    </location>
</feature>
<feature type="compositionally biased region" description="Basic residues" evidence="10">
    <location>
        <begin position="1266"/>
        <end position="1276"/>
    </location>
</feature>
<feature type="compositionally biased region" description="Polar residues" evidence="10">
    <location>
        <begin position="1360"/>
        <end position="1375"/>
    </location>
</feature>
<feature type="compositionally biased region" description="Low complexity" evidence="10">
    <location>
        <begin position="1376"/>
        <end position="1386"/>
    </location>
</feature>
<feature type="compositionally biased region" description="Basic and acidic residues" evidence="10">
    <location>
        <begin position="1620"/>
        <end position="1632"/>
    </location>
</feature>
<feature type="compositionally biased region" description="Basic and acidic residues" evidence="10">
    <location>
        <begin position="1659"/>
        <end position="1669"/>
    </location>
</feature>
<feature type="compositionally biased region" description="Basic residues" evidence="10">
    <location>
        <begin position="1716"/>
        <end position="1726"/>
    </location>
</feature>
<feature type="compositionally biased region" description="Polar residues" evidence="10">
    <location>
        <begin position="1772"/>
        <end position="1784"/>
    </location>
</feature>
<feature type="compositionally biased region" description="Basic and acidic residues" evidence="10">
    <location>
        <begin position="1887"/>
        <end position="1899"/>
    </location>
</feature>
<feature type="compositionally biased region" description="Low complexity" evidence="10">
    <location>
        <begin position="2504"/>
        <end position="2522"/>
    </location>
</feature>
<feature type="binding site" evidence="4">
    <location>
        <begin position="239"/>
        <end position="246"/>
    </location>
    <ligand>
        <name>ATP</name>
        <dbReference type="ChEBI" id="CHEBI:30616"/>
    </ligand>
</feature>
<feature type="site" description="Arginine finger; crucial for GTP hydrolysis by stabilizing the transition state" evidence="7">
    <location>
        <position position="2166"/>
    </location>
</feature>
<feature type="modified residue" description="Phosphoserine" evidence="13">
    <location>
        <position position="755"/>
    </location>
</feature>
<feature type="modified residue" description="Phosphoserine" evidence="3">
    <location>
        <position position="1243"/>
    </location>
</feature>
<feature type="modified residue" description="Phosphothreonine" evidence="3">
    <location>
        <position position="1245"/>
    </location>
</feature>
<feature type="modified residue" description="Phosphoserine" evidence="13">
    <location>
        <position position="1259"/>
    </location>
</feature>
<feature type="modified residue" description="Phosphoserine" evidence="2">
    <location>
        <position position="1300"/>
    </location>
</feature>
<feature type="modified residue" description="Phosphoserine" evidence="2">
    <location>
        <position position="1318"/>
    </location>
</feature>
<feature type="modified residue" description="Phosphoserine" evidence="13">
    <location>
        <position position="2016"/>
    </location>
</feature>
<feature type="modified residue" description="Phosphoserine" evidence="2">
    <location>
        <position position="2380"/>
    </location>
</feature>
<feature type="modified residue" description="Phosphoserine" evidence="2">
    <location>
        <position position="2542"/>
    </location>
</feature>
<protein>
    <recommendedName>
        <fullName>Unconventional myosin-IXa</fullName>
    </recommendedName>
    <alternativeName>
        <fullName>Myr 7</fullName>
    </alternativeName>
    <alternativeName>
        <fullName>Unconventional myosin-9a</fullName>
    </alternativeName>
</protein>
<name>MYO9A_RAT</name>
<reference key="1">
    <citation type="journal article" date="1998" name="J. Cell Sci.">
        <title>Myr 7 is a novel myosin IX-RhoGAP expressed in rat brain.</title>
        <authorList>
            <person name="Chieregatti E."/>
            <person name="Gaertner A."/>
            <person name="Stoeffler H.-E."/>
            <person name="Baehler M."/>
        </authorList>
    </citation>
    <scope>NUCLEOTIDE SEQUENCE [MRNA]</scope>
    <scope>FUNCTION</scope>
    <scope>TISSUE SPECIFICITY</scope>
    <scope>SUBCELLULAR LOCATION</scope>
    <scope>DEVELOPMENTAL STAGE</scope>
</reference>
<reference key="2">
    <citation type="journal article" date="2012" name="Nat. Commun.">
        <title>Quantitative maps of protein phosphorylation sites across 14 different rat organs and tissues.</title>
        <authorList>
            <person name="Lundby A."/>
            <person name="Secher A."/>
            <person name="Lage K."/>
            <person name="Nordsborg N.B."/>
            <person name="Dmytriyev A."/>
            <person name="Lundby C."/>
            <person name="Olsen J.V."/>
        </authorList>
    </citation>
    <scope>PHOSPHORYLATION [LARGE SCALE ANALYSIS] AT SER-755; SER-1259 AND SER-2016</scope>
    <scope>IDENTIFICATION BY MASS SPECTROMETRY [LARGE SCALE ANALYSIS]</scope>
</reference>
<comment type="function">
    <text evidence="3 11">Myosins are actin-based motor molecules with ATPase activity. Unconventional myosins serve in intracellular movements (PubMed:9819351). Regulates Rho by stimulating it's GTPase activity in neurons (PubMed:9819351). Required for the regulation of neurite branching and motor neuron axon guidance (By similarity).</text>
</comment>
<comment type="subcellular location">
    <subcellularLocation>
        <location evidence="12">Membrane</location>
        <topology evidence="12">Single-pass membrane protein</topology>
    </subcellularLocation>
    <subcellularLocation>
        <location evidence="11">Cytoplasm</location>
    </subcellularLocation>
    <subcellularLocation>
        <location evidence="3">Synapse</location>
    </subcellularLocation>
    <subcellularLocation>
        <location evidence="3">Cell projection</location>
        <location evidence="3">Growth cone</location>
    </subcellularLocation>
    <text evidence="3 11">Localized in the cytoplasm of cell bodies, dendrites and axons with occasional hints of an enrichment near the plasma membrane. Localized at the neuromuscular junction (By similarity).</text>
</comment>
<comment type="tissue specificity">
    <text evidence="11">Expressed at high levels in brain, followed by testis and spleen. Expressed at very low levels, in kidney. Detected abundantly in brain and testis and at lower levels in adrenal gland, kidney, lung and spleen (at protein level). In adrenal gland it is mostly found in the medulla but not in the cortex. In brain, it is found in the cerebellum and the CA2-CA3 regions of the hippocampus.</text>
</comment>
<comment type="developmental stage">
    <text evidence="11">Expressed at high levels in developing forebrain. This expression decreases slightly in embryonic and early postnatal days.</text>
</comment>
<comment type="PTM">
    <text evidence="2">Phosphorylated by ALPK1 following monosodium urate monohydrate (MSU)-induced inflammation.</text>
</comment>
<comment type="similarity">
    <text evidence="12">Belongs to the TRAFAC class myosin-kinesin ATPase superfamily. Myosin family.</text>
</comment>
<comment type="caution">
    <text evidence="12">Represents an unconventional myosin. This protein should not be confused with the conventional myosin-9 (MYH9).</text>
</comment>
<keyword id="KW-0067">ATP-binding</keyword>
<keyword id="KW-0966">Cell projection</keyword>
<keyword id="KW-0175">Coiled coil</keyword>
<keyword id="KW-0963">Cytoplasm</keyword>
<keyword id="KW-0343">GTPase activation</keyword>
<keyword id="KW-0472">Membrane</keyword>
<keyword id="KW-0479">Metal-binding</keyword>
<keyword id="KW-0505">Motor protein</keyword>
<keyword id="KW-0518">Myosin</keyword>
<keyword id="KW-0547">Nucleotide-binding</keyword>
<keyword id="KW-0597">Phosphoprotein</keyword>
<keyword id="KW-1185">Reference proteome</keyword>
<keyword id="KW-0677">Repeat</keyword>
<keyword id="KW-0770">Synapse</keyword>
<keyword id="KW-0812">Transmembrane</keyword>
<keyword id="KW-1133">Transmembrane helix</keyword>
<keyword id="KW-0862">Zinc</keyword>
<keyword id="KW-0863">Zinc-finger</keyword>
<accession>Q9Z1N3</accession>
<gene>
    <name type="primary">Myo9a</name>
    <name type="synonym">Myr7</name>
</gene>
<proteinExistence type="evidence at protein level"/>
<evidence type="ECO:0000250" key="1"/>
<evidence type="ECO:0000250" key="2">
    <source>
        <dbReference type="UniProtKB" id="B2RTY4"/>
    </source>
</evidence>
<evidence type="ECO:0000250" key="3">
    <source>
        <dbReference type="UniProtKB" id="Q8C170"/>
    </source>
</evidence>
<evidence type="ECO:0000255" key="4"/>
<evidence type="ECO:0000255" key="5">
    <source>
        <dbReference type="PROSITE-ProRule" id="PRU00116"/>
    </source>
</evidence>
<evidence type="ECO:0000255" key="6">
    <source>
        <dbReference type="PROSITE-ProRule" id="PRU00166"/>
    </source>
</evidence>
<evidence type="ECO:0000255" key="7">
    <source>
        <dbReference type="PROSITE-ProRule" id="PRU00172"/>
    </source>
</evidence>
<evidence type="ECO:0000255" key="8">
    <source>
        <dbReference type="PROSITE-ProRule" id="PRU00226"/>
    </source>
</evidence>
<evidence type="ECO:0000255" key="9">
    <source>
        <dbReference type="PROSITE-ProRule" id="PRU00782"/>
    </source>
</evidence>
<evidence type="ECO:0000256" key="10">
    <source>
        <dbReference type="SAM" id="MobiDB-lite"/>
    </source>
</evidence>
<evidence type="ECO:0000269" key="11">
    <source>
    </source>
</evidence>
<evidence type="ECO:0000305" key="12"/>
<evidence type="ECO:0007744" key="13">
    <source>
    </source>
</evidence>
<sequence length="2626" mass="301382">MNVSDGGRRRFEDNEHTLRIYPGTISEGTIYCPIPARKNSTAAEVIDSLINRLHLDKTKCYVLAEVKEFGGEEWILNPTDCPVQRMMLWPRMALENRLSGEDYRFLLREKNLDGSIHYGSLQSWLRVTEERRRMMERGFLPQPQQKDFDDLCSLPDLNEKTLLENLRNRFKHEKIYTYVGSILIAINPFKFLPIYNPKYVKMYDNHQLGKLEPHIYAVADVAYHAMLQRKKNQCIVISGESGSGKTQSTNFLIHHLTALSQKGFASGVEQIILGAGPVLEAFGNAKTAHNNNSSRFGKFIQVNYQETGTVLGAYVEKYLLEKSRLVYQEHNERNYHVFYYLLAGASEEERLAFHLKQPEEYHFLNQITKKPLRQSWDDYCYDSEPDCFTVEGEDLRHDFERLQLAMEMVGFLPKTRRQIFSLLSAILHLGNISYKKKTYRDDSIDICNPEVLPIVSELLEVKEEMLFEALVTRKTVTVGEKLILPYKLAEAVTVRNSMAKSLYSALFDWIVFRINHALLNSKDLEKDTKTLSIGVLDIFGFEDYENNSFEQFCINFANERLQHYFNQHIFKLEQEEYRTEGISWHNIDYIDNTCCINLISKKPTGLLHLLDEESNFPQATNQTLLDKFKHQHEENSYIEFPAVMEPAFIIKHYAGKVKYGVKDFREKNTDHMRPDIVALLRSSRNAFVSGMTGIDPVAVFRWAVLRAFFRAVVAFREAGKRHIQRKSGHDDTTPCTILKSMDSFSFLQHPVHQRSLEILQRCKEEKYSITRKNPRTPLSDLQGMNTLNEKNQHDTFDIAWNVRTGIRQSRLPTNNTSLLDKDGIFANSASSKLLERAHGILTRNKNFRSKPVLPKHLLEVNSLKHLTRLTLQDRITKSLLHLHKKKKPPSISAQFQVSLSKLMETLDQAEPYFVKCIRSNAEKLPLRFSDALVLRQLRYTGMLETVRIRQSGYSSKYSFQDFVSHFHVLLPQHIIPSKFNIQDFFRKININPDNYQVGKTMVFLKEHERQHLQDLLHQEVLRRIILLQRWFRVLLSRQQFLHLRQASVIIQRFWRNYLNQKQVRNAAVEKDAFIMASAASLLQASWRAHLERQRYLELRAAAVIIQQRWRELCRRRHRAATCIQSRWRGYRQSKKYKEQRNKIILLQSIYRGFRARQRYKALKEERLKETKLEHGLAQIKTCGPLEIQGSDPSEWEDRSFANRVKAIEECKSVIESNRISRESSMDFSKESPDKQQERGRSQSGTDLQGDVIVRQRPKSLEDLHQKKVGRAKRESRRMRELEQAIFSLELLKVRSLGGMSPSEERRWSTELMPEGLQSPQGTPDSESSQGSLELLTCDENQKSKPESLILDDGELKISSPSTFTNPKFDSQNNALSASSETSSTFSGKGASSDSEHLKNGTAEEKLVYSSQPITCKSQLRDSFVSSSLPTFFYIPHQEPLKTSSQLDTSIQRNKLPERETTLKTTLTLDINREARKCQFSGQVTPLNPDSSCTVLKKLEKLNIEKEKRQKQLQQQNEKEMMEQIRQQTDILEKERKAFKTIEQSRTEASLLAPSFYQSRQKVERPSSLHIQNTPSKGEAGVLGSPSALATKDSPSIHLPPKDRPVTLFFERKGSPCQSRTVKELTKTERMGTQHDAACRLSNNHNTEREHFKSTHSYSHRSDDPSREGSSRPIFFTPKDNVITPLVHSGNPQVHKQDEPAWKSKLAGPGQREVARPAHKKKARMARTRSDFLTRGTFADGEGDTEEDDYDDIIEPLLSLDQASHSELGPVSSLGQASHSDSEMTSQRFSSVDEQARLHKAMSQGEITKLAGRQKSSDLDIRPQRAKMRFWAKGKQGEKKTTRVKPAPQSEVSSLFAGSDVTPVHPFSDELTQYHPTPPLSPELPGSCRKEFKENKEPSPKAKRKRGVKISSVALDSMHWQNDSVQIIASANDLKSMDEFLLKKMNDLDNEDSKKDTLVDVVFKKALKEFRQNIFSSYSSALAMDDGKSIRYKDLYALFEQILEKTMRFEQRDWNESPVRVWVNTFKVFLDEYMNEFKTLDSTAPKVLKTERKKRRKKETDLVEEHNGHMFKATQYSIPTYCEYCSSLIWIMDRASVCKLCKYACHKKCCLKTTAKCSKKYDPELSSRQFGVELSRLTSEDRAVPLVVEKLINYIEMHGLYTEGIYRKSGSTNKIKELRQGLDTDAESVNLDDYNIHVIASVFKQWLRDLPNPLMTFELYEEFLRAMGLQERKETIRGVYSVIDQLSRTHLSTLERLIFHLVRIALQEDTNRMSANALAIVFAPCILRCPDTTDPLQSVQDISKTTTCVELIVVEQMNKYKARLKDISSLEFAENKAKTRLSLIRRSMKPVLIAVRFMSITRSSVSGKGRLHRGSHPNPSSPVIVRLPSMSDVPEETLTSETAMDTDVTDQQQAAMQQEEKVLTEQIENLQKEKEELTFEMLVLEPRASDDEALESEASIGTADSSENLNMDPEERSLALSSLKAAGKSEPSSKFRKQLRKQPDSLDSVSSSVSSCLSNTTSSHGTRKRFQIYSKSPFYRAASACEAQGMEGPLGQAKSLEDRPQFISRGTFNPEKGKQKLKNVKNSPQKTKETPEGTVSSGRKKTVDSDCSSTQQLPLFGNNEFMV</sequence>